<reference evidence="24" key="1">
    <citation type="journal article" date="2000" name="Genomics">
        <title>Identification of the human Mnk2 gene (MKNK2) through protein interaction with estrogen receptor beta.</title>
        <authorList>
            <person name="Slentz-Kesler K."/>
            <person name="Moore J.T."/>
            <person name="Lombard M."/>
            <person name="Zhang J."/>
            <person name="Hollingsworth R."/>
            <person name="Weiner M.P."/>
        </authorList>
    </citation>
    <scope>NUCLEOTIDE SEQUENCE [MRNA] (ISOFORMS 1; 2; 3; 4 AND 5)</scope>
    <scope>TISSUE SPECIFICITY</scope>
    <scope>INTERACTION WITH ESR2</scope>
    <source>
        <tissue>Fetal brain</tissue>
    </source>
</reference>
<reference evidence="24" key="2">
    <citation type="submission" date="1999-12" db="EMBL/GenBank/DDBJ databases">
        <title>A novel gene expressed in human adrenal gland.</title>
        <authorList>
            <person name="Li Y."/>
            <person name="Shi J."/>
            <person name="Huang C."/>
            <person name="Ren S."/>
            <person name="Fu S."/>
            <person name="Zhou J."/>
            <person name="Yu Y."/>
            <person name="Xu S."/>
            <person name="Wang Y."/>
            <person name="Fu G."/>
            <person name="Chen Z."/>
            <person name="Han Z."/>
        </authorList>
    </citation>
    <scope>NUCLEOTIDE SEQUENCE [LARGE SCALE MRNA] (ISOFORM 2)</scope>
    <source>
        <tissue>Adrenal gland</tissue>
    </source>
</reference>
<reference key="3">
    <citation type="journal article" date="2004" name="Nature">
        <title>The DNA sequence and biology of human chromosome 19.</title>
        <authorList>
            <person name="Grimwood J."/>
            <person name="Gordon L.A."/>
            <person name="Olsen A.S."/>
            <person name="Terry A."/>
            <person name="Schmutz J."/>
            <person name="Lamerdin J.E."/>
            <person name="Hellsten U."/>
            <person name="Goodstein D."/>
            <person name="Couronne O."/>
            <person name="Tran-Gyamfi M."/>
            <person name="Aerts A."/>
            <person name="Altherr M."/>
            <person name="Ashworth L."/>
            <person name="Bajorek E."/>
            <person name="Black S."/>
            <person name="Branscomb E."/>
            <person name="Caenepeel S."/>
            <person name="Carrano A.V."/>
            <person name="Caoile C."/>
            <person name="Chan Y.M."/>
            <person name="Christensen M."/>
            <person name="Cleland C.A."/>
            <person name="Copeland A."/>
            <person name="Dalin E."/>
            <person name="Dehal P."/>
            <person name="Denys M."/>
            <person name="Detter J.C."/>
            <person name="Escobar J."/>
            <person name="Flowers D."/>
            <person name="Fotopulos D."/>
            <person name="Garcia C."/>
            <person name="Georgescu A.M."/>
            <person name="Glavina T."/>
            <person name="Gomez M."/>
            <person name="Gonzales E."/>
            <person name="Groza M."/>
            <person name="Hammon N."/>
            <person name="Hawkins T."/>
            <person name="Haydu L."/>
            <person name="Ho I."/>
            <person name="Huang W."/>
            <person name="Israni S."/>
            <person name="Jett J."/>
            <person name="Kadner K."/>
            <person name="Kimball H."/>
            <person name="Kobayashi A."/>
            <person name="Larionov V."/>
            <person name="Leem S.-H."/>
            <person name="Lopez F."/>
            <person name="Lou Y."/>
            <person name="Lowry S."/>
            <person name="Malfatti S."/>
            <person name="Martinez D."/>
            <person name="McCready P.M."/>
            <person name="Medina C."/>
            <person name="Morgan J."/>
            <person name="Nelson K."/>
            <person name="Nolan M."/>
            <person name="Ovcharenko I."/>
            <person name="Pitluck S."/>
            <person name="Pollard M."/>
            <person name="Popkie A.P."/>
            <person name="Predki P."/>
            <person name="Quan G."/>
            <person name="Ramirez L."/>
            <person name="Rash S."/>
            <person name="Retterer J."/>
            <person name="Rodriguez A."/>
            <person name="Rogers S."/>
            <person name="Salamov A."/>
            <person name="Salazar A."/>
            <person name="She X."/>
            <person name="Smith D."/>
            <person name="Slezak T."/>
            <person name="Solovyev V."/>
            <person name="Thayer N."/>
            <person name="Tice H."/>
            <person name="Tsai M."/>
            <person name="Ustaszewska A."/>
            <person name="Vo N."/>
            <person name="Wagner M."/>
            <person name="Wheeler J."/>
            <person name="Wu K."/>
            <person name="Xie G."/>
            <person name="Yang J."/>
            <person name="Dubchak I."/>
            <person name="Furey T.S."/>
            <person name="DeJong P."/>
            <person name="Dickson M."/>
            <person name="Gordon D."/>
            <person name="Eichler E.E."/>
            <person name="Pennacchio L.A."/>
            <person name="Richardson P."/>
            <person name="Stubbs L."/>
            <person name="Rokhsar D.S."/>
            <person name="Myers R.M."/>
            <person name="Rubin E.M."/>
            <person name="Lucas S.M."/>
        </authorList>
    </citation>
    <scope>NUCLEOTIDE SEQUENCE [LARGE SCALE GENOMIC DNA]</scope>
</reference>
<reference key="4">
    <citation type="journal article" date="2004" name="Genome Res.">
        <title>The status, quality, and expansion of the NIH full-length cDNA project: the Mammalian Gene Collection (MGC).</title>
        <authorList>
            <consortium name="The MGC Project Team"/>
        </authorList>
    </citation>
    <scope>NUCLEOTIDE SEQUENCE [LARGE SCALE MRNA] (ISOFORM 2)</scope>
    <source>
        <tissue>Uterus</tissue>
    </source>
</reference>
<reference key="5">
    <citation type="journal article" date="2001" name="Mol. Cell. Biol.">
        <title>The mitogen-activated protein kinase signal-integrating kinase Mnk2 is a eukaryotic initiation factor 4E kinase with high levels of basal activity in mammalian cells.</title>
        <authorList>
            <person name="Scheper G.C."/>
            <person name="Morrice N.A."/>
            <person name="Kleijn M."/>
            <person name="Proud C.G."/>
        </authorList>
    </citation>
    <scope>FUNCTION AS EIF4E KINASE</scope>
    <scope>ACTIVITY REGULATION</scope>
    <scope>ALTERNATIVE SPLICING</scope>
    <scope>PHOSPHORYLATION BY MAPK1/ERK2; MAPK11 AND MAPK14</scope>
    <scope>INTERACTION WITH EIF4G PROTEINS</scope>
</reference>
<reference evidence="24" key="6">
    <citation type="journal article" date="2001" name="Mol. Cell. Biol.">
        <title>Negative regulation of protein translation by mitogen-activated protein kinase-interacting kinases 1 and 2.</title>
        <authorList>
            <person name="Knauf U."/>
            <person name="Tschopp C."/>
            <person name="Gram H."/>
        </authorList>
    </citation>
    <scope>FUNCTION</scope>
    <scope>PHOSPHORYLATION AT THR-244; THR-249 AND THR-379</scope>
    <scope>MUTAGENESIS OF THR-244; THR-249 AND THR-379</scope>
    <source>
        <tissue>Leukocyte</tissue>
    </source>
</reference>
<reference key="7">
    <citation type="journal article" date="2003" name="Mol. Cell. Biol.">
        <title>The N and C termini of the splice variants of the human mitogen-activated protein kinase-interacting kinase Mnk2 determine activity and localization.</title>
        <authorList>
            <person name="Scheper G.C."/>
            <person name="Parra J.L."/>
            <person name="Wilson M."/>
            <person name="Van Kollenburg B."/>
            <person name="Vertegaal A.C.O."/>
            <person name="Han Z.-G."/>
            <person name="Proud C.G."/>
        </authorList>
    </citation>
    <scope>FUNCTION AS EIF4E KINASE</scope>
    <scope>ALTERNATIVE SPLICING</scope>
    <scope>SUBCELLULAR LOCATION</scope>
    <scope>PHOSPHORYLATION</scope>
    <scope>INTERACTION WITH EIF4E; EIF4G1 AND EIF4G2</scope>
</reference>
<reference key="8">
    <citation type="journal article" date="2005" name="Immunity">
        <title>The Mnks are novel components in the control of TNF alpha biosynthesis and phosphorylate and regulate hnRNP A1.</title>
        <authorList>
            <person name="Buxade M."/>
            <person name="Parra J.L."/>
            <person name="Rousseau S."/>
            <person name="Shpiro N."/>
            <person name="Marquez R."/>
            <person name="Morrice N."/>
            <person name="Bain J."/>
            <person name="Espel E."/>
            <person name="Proud C.G."/>
        </authorList>
    </citation>
    <scope>FUNCTION AS HNRNPA1 KINASE</scope>
    <scope>ACTIVITY REGULATION</scope>
</reference>
<reference key="9">
    <citation type="journal article" date="2008" name="J. Biol. Chem.">
        <title>The PSF.p54nrb complex is a novel Mnk substrate that binds the mRNA for tumor necrosis factor alpha.</title>
        <authorList>
            <person name="Buxade M."/>
            <person name="Morrice N."/>
            <person name="Krebs D.L."/>
            <person name="Proud C.G."/>
        </authorList>
    </citation>
    <scope>FUNCTION AS SFPQ/PSF KINASE</scope>
</reference>
<reference key="10">
    <citation type="journal article" date="2008" name="J. Biol. Chem.">
        <title>Regulation of arsenic trioxide-induced cellular responses by Mnk1 and Mnk2.</title>
        <authorList>
            <person name="Dolniak B."/>
            <person name="Katsoulidis E."/>
            <person name="Carayol N."/>
            <person name="Altman J.K."/>
            <person name="Redig A.J."/>
            <person name="Tallman M.S."/>
            <person name="Ueda T."/>
            <person name="Watanabe-Fukunaga R."/>
            <person name="Fukunaga R."/>
            <person name="Platanias L.C."/>
        </authorList>
    </citation>
    <scope>FUNCTION IN ARSENIC TRIOXIDE SIGNALING</scope>
    <scope>PHOSPHORYLATION IN RESPONSE TO ARSENIC TRIOXIDE</scope>
</reference>
<reference key="11">
    <citation type="journal article" date="2008" name="Mol. Cell">
        <title>Kinase-selective enrichment enables quantitative phosphoproteomics of the kinome across the cell cycle.</title>
        <authorList>
            <person name="Daub H."/>
            <person name="Olsen J.V."/>
            <person name="Bairlein M."/>
            <person name="Gnad F."/>
            <person name="Oppermann F.S."/>
            <person name="Korner R."/>
            <person name="Greff Z."/>
            <person name="Keri G."/>
            <person name="Stemmann O."/>
            <person name="Mann M."/>
        </authorList>
    </citation>
    <scope>IDENTIFICATION BY MASS SPECTROMETRY [LARGE SCALE ANALYSIS]</scope>
    <source>
        <tissue>Cervix carcinoma</tissue>
    </source>
</reference>
<reference key="12">
    <citation type="journal article" date="2008" name="Proc. Natl. Acad. Sci. U.S.A.">
        <title>A quantitative atlas of mitotic phosphorylation.</title>
        <authorList>
            <person name="Dephoure N."/>
            <person name="Zhou C."/>
            <person name="Villen J."/>
            <person name="Beausoleil S.A."/>
            <person name="Bakalarski C.E."/>
            <person name="Elledge S.J."/>
            <person name="Gygi S.P."/>
        </authorList>
    </citation>
    <scope>IDENTIFICATION BY MASS SPECTROMETRY [LARGE SCALE ANALYSIS]</scope>
    <source>
        <tissue>Cervix carcinoma</tissue>
    </source>
</reference>
<reference key="13">
    <citation type="journal article" date="2009" name="Sci. Signal.">
        <title>Quantitative phosphoproteomic analysis of T cell receptor signaling reveals system-wide modulation of protein-protein interactions.</title>
        <authorList>
            <person name="Mayya V."/>
            <person name="Lundgren D.H."/>
            <person name="Hwang S.-I."/>
            <person name="Rezaul K."/>
            <person name="Wu L."/>
            <person name="Eng J.K."/>
            <person name="Rodionov V."/>
            <person name="Han D.K."/>
        </authorList>
    </citation>
    <scope>IDENTIFICATION BY MASS SPECTROMETRY [LARGE SCALE ANALYSIS]</scope>
    <source>
        <tissue>Leukemic T-cell</tissue>
    </source>
</reference>
<reference key="14">
    <citation type="journal article" date="2010" name="J. Med. Chem.">
        <title>Discovery of mitogen-activated protein kinase-interacting kinase 1 inhibitors by a comprehensive fragment-oriented virtual screening approach.</title>
        <authorList>
            <person name="Oyarzabal J."/>
            <person name="Zarich N."/>
            <person name="Albarran M.I."/>
            <person name="Palacios I."/>
            <person name="Urbano-Cuadrado M."/>
            <person name="Mateos G."/>
            <person name="Reymundo I."/>
            <person name="Rabal O."/>
            <person name="Salgado A."/>
            <person name="Corrionero A."/>
            <person name="Fominaya J."/>
            <person name="Pastor J."/>
            <person name="Bischoff J.R."/>
        </authorList>
    </citation>
    <scope>ACTIVITY REGULATION</scope>
</reference>
<reference key="15">
    <citation type="journal article" date="2010" name="Mol. Cell. Biol.">
        <title>Regulation of eukaryotic initiation factor 4E (eIF4E) phosphorylation by mitogen-activated protein kinase occurs through modulation of Mnk1-eIF4G interaction.</title>
        <authorList>
            <person name="Shveygert M."/>
            <person name="Kaiser C."/>
            <person name="Bradrick S.S."/>
            <person name="Gromeier M."/>
        </authorList>
    </citation>
    <scope>FUNCTION AS EIF4E KINASE</scope>
    <scope>INTERACTION WITH EIF4G1</scope>
</reference>
<reference key="16">
    <citation type="journal article" date="2010" name="Mol. Pharmacol.">
        <title>Negative regulatory effects of Mnk kinases in the generation of chemotherapy-induced antileukemic responses.</title>
        <authorList>
            <person name="Altman J.K."/>
            <person name="Glaser H."/>
            <person name="Sassano A."/>
            <person name="Joshi S."/>
            <person name="Ueda T."/>
            <person name="Watanabe-Fukunaga R."/>
            <person name="Fukunaga R."/>
            <person name="Tallman M.S."/>
            <person name="Platanias L.C."/>
        </authorList>
    </citation>
    <scope>ACTIVITY REGULATION</scope>
</reference>
<reference key="17">
    <citation type="journal article" date="2010" name="Neoplasia">
        <title>Protein phosphatase 2A negatively regulates eukaryotic initiation factor 4E phosphorylation and eIF4F assembly through direct dephosphorylation of Mnk and eIF4E.</title>
        <authorList>
            <person name="Li Y."/>
            <person name="Yue P."/>
            <person name="Deng X."/>
            <person name="Ueda T."/>
            <person name="Fukunaga R."/>
            <person name="Khuri F.R."/>
            <person name="Sun S.-Y."/>
        </authorList>
    </citation>
    <scope>FUNCTION IN EIF4E PHOSPHORYLATION REGULATION</scope>
    <scope>DEPHOSPHORYLATION BY PP2A</scope>
    <scope>ACTIVITY REGULATION</scope>
</reference>
<reference key="18">
    <citation type="journal article" date="2011" name="J. Biol. Chem.">
        <title>Essential role for Mnk kinases in type II interferon (IFNgamma) signaling and its suppressive effects on normal hematopoiesis.</title>
        <authorList>
            <person name="Joshi S."/>
            <person name="Sharma B."/>
            <person name="Kaur S."/>
            <person name="Majchrzak B."/>
            <person name="Ueda T."/>
            <person name="Fukunaga R."/>
            <person name="Verma A.K."/>
            <person name="Fish E.N."/>
            <person name="Platanias L.C."/>
        </authorList>
    </citation>
    <scope>FUNCTION IN IFNGAMMA SIGNALING</scope>
</reference>
<reference key="19">
    <citation type="journal article" date="2008" name="Front. Biosci.">
        <title>The Mnks: MAP kinase-interacting kinases (MAP kinase signal-integrating kinases).</title>
        <authorList>
            <person name="Buxade M."/>
            <person name="Parra-Palau J.L."/>
            <person name="Proud C.G."/>
        </authorList>
    </citation>
    <scope>REVIEW</scope>
</reference>
<reference key="20">
    <citation type="journal article" date="2013" name="J. Proteome Res.">
        <title>Toward a comprehensive characterization of a human cancer cell phosphoproteome.</title>
        <authorList>
            <person name="Zhou H."/>
            <person name="Di Palma S."/>
            <person name="Preisinger C."/>
            <person name="Peng M."/>
            <person name="Polat A.N."/>
            <person name="Heck A.J."/>
            <person name="Mohammed S."/>
        </authorList>
    </citation>
    <scope>PHOSPHORYLATION [LARGE SCALE ANALYSIS] AT SER-452</scope>
    <scope>IDENTIFICATION BY MASS SPECTROMETRY [LARGE SCALE ANALYSIS]</scope>
    <source>
        <tissue>Cervix carcinoma</tissue>
        <tissue>Erythroleukemia</tissue>
    </source>
</reference>
<reference key="21">
    <citation type="journal article" date="2005" name="Structure">
        <title>Crystal structures of the Mnk2 kinase domain reveal an inhibitory conformation and a zinc binding site.</title>
        <authorList>
            <person name="Jauch R."/>
            <person name="Jaekel S."/>
            <person name="Netter C."/>
            <person name="Schreiter K."/>
            <person name="Aicher B."/>
            <person name="Jaeckle H."/>
            <person name="Wahl M.C."/>
        </authorList>
    </citation>
    <scope>X-RAY CRYSTALLOGRAPHY (2.1 ANGSTROMS) OF 72-385 IN COMPLEX WITH ZINC</scope>
    <scope>SUBUNIT</scope>
</reference>
<reference key="22">
    <citation type="journal article" date="2006" name="EMBO J.">
        <title>Mitogen-activated protein kinases interacting kinases are autoinhibited by a reprogrammed activation segment.</title>
        <authorList>
            <person name="Jauch R."/>
            <person name="Cho M.-K."/>
            <person name="Jaekel S."/>
            <person name="Netter C."/>
            <person name="Schreiter K."/>
            <person name="Aicher B."/>
            <person name="Zweckstetter M."/>
            <person name="Jaeckle H."/>
            <person name="Wahl M.C."/>
        </authorList>
    </citation>
    <scope>X-RAY CRYSTALLOGRAPHY (2.71 ANGSTROMS) OF 72-385 IN COMPLEX WITH ZINC AND STAUROSPORINE</scope>
    <scope>ACTIVITY REGULATION</scope>
    <scope>MUTAGENESIS OF ASP-228</scope>
</reference>
<reference key="23">
    <citation type="journal article" date="2007" name="Nature">
        <title>Patterns of somatic mutation in human cancer genomes.</title>
        <authorList>
            <person name="Greenman C."/>
            <person name="Stephens P."/>
            <person name="Smith R."/>
            <person name="Dalgliesh G.L."/>
            <person name="Hunter C."/>
            <person name="Bignell G."/>
            <person name="Davies H."/>
            <person name="Teague J."/>
            <person name="Butler A."/>
            <person name="Stevens C."/>
            <person name="Edkins S."/>
            <person name="O'Meara S."/>
            <person name="Vastrik I."/>
            <person name="Schmidt E.E."/>
            <person name="Avis T."/>
            <person name="Barthorpe S."/>
            <person name="Bhamra G."/>
            <person name="Buck G."/>
            <person name="Choudhury B."/>
            <person name="Clements J."/>
            <person name="Cole J."/>
            <person name="Dicks E."/>
            <person name="Forbes S."/>
            <person name="Gray K."/>
            <person name="Halliday K."/>
            <person name="Harrison R."/>
            <person name="Hills K."/>
            <person name="Hinton J."/>
            <person name="Jenkinson A."/>
            <person name="Jones D."/>
            <person name="Menzies A."/>
            <person name="Mironenko T."/>
            <person name="Perry J."/>
            <person name="Raine K."/>
            <person name="Richardson D."/>
            <person name="Shepherd R."/>
            <person name="Small A."/>
            <person name="Tofts C."/>
            <person name="Varian J."/>
            <person name="Webb T."/>
            <person name="West S."/>
            <person name="Widaa S."/>
            <person name="Yates A."/>
            <person name="Cahill D.P."/>
            <person name="Louis D.N."/>
            <person name="Goldstraw P."/>
            <person name="Nicholson A.G."/>
            <person name="Brasseur F."/>
            <person name="Looijenga L."/>
            <person name="Weber B.L."/>
            <person name="Chiew Y.-E."/>
            <person name="DeFazio A."/>
            <person name="Greaves M.F."/>
            <person name="Green A.R."/>
            <person name="Campbell P."/>
            <person name="Birney E."/>
            <person name="Easton D.F."/>
            <person name="Chenevix-Trench G."/>
            <person name="Tan M.-H."/>
            <person name="Khoo S.K."/>
            <person name="Teh B.T."/>
            <person name="Yuen S.T."/>
            <person name="Leung S.Y."/>
            <person name="Wooster R."/>
            <person name="Futreal P.A."/>
            <person name="Stratton M.R."/>
        </authorList>
    </citation>
    <scope>VARIANT [LARGE SCALE ANALYSIS] ASN-73</scope>
</reference>
<keyword id="KW-0002">3D-structure</keyword>
<keyword id="KW-0025">Alternative splicing</keyword>
<keyword id="KW-0053">Apoptosis</keyword>
<keyword id="KW-0067">ATP-binding</keyword>
<keyword id="KW-0963">Cytoplasm</keyword>
<keyword id="KW-0418">Kinase</keyword>
<keyword id="KW-0460">Magnesium</keyword>
<keyword id="KW-0479">Metal-binding</keyword>
<keyword id="KW-0547">Nucleotide-binding</keyword>
<keyword id="KW-0539">Nucleus</keyword>
<keyword id="KW-0597">Phosphoprotein</keyword>
<keyword id="KW-1267">Proteomics identification</keyword>
<keyword id="KW-1185">Reference proteome</keyword>
<keyword id="KW-0723">Serine/threonine-protein kinase</keyword>
<keyword id="KW-0808">Transferase</keyword>
<keyword id="KW-0810">Translation regulation</keyword>
<keyword id="KW-0862">Zinc</keyword>
<organism evidence="25">
    <name type="scientific">Homo sapiens</name>
    <name type="common">Human</name>
    <dbReference type="NCBI Taxonomy" id="9606"/>
    <lineage>
        <taxon>Eukaryota</taxon>
        <taxon>Metazoa</taxon>
        <taxon>Chordata</taxon>
        <taxon>Craniata</taxon>
        <taxon>Vertebrata</taxon>
        <taxon>Euteleostomi</taxon>
        <taxon>Mammalia</taxon>
        <taxon>Eutheria</taxon>
        <taxon>Euarchontoglires</taxon>
        <taxon>Primates</taxon>
        <taxon>Haplorrhini</taxon>
        <taxon>Catarrhini</taxon>
        <taxon>Hominidae</taxon>
        <taxon>Homo</taxon>
    </lineage>
</organism>
<name>MKNK2_HUMAN</name>
<feature type="chain" id="PRO_0000086336" description="MAP kinase-interacting serine/threonine-protein kinase 2">
    <location>
        <begin position="1"/>
        <end position="465"/>
    </location>
</feature>
<feature type="domain" description="Protein kinase" evidence="3">
    <location>
        <begin position="84"/>
        <end position="388"/>
    </location>
</feature>
<feature type="region of interest" description="Disordered" evidence="5">
    <location>
        <begin position="23"/>
        <end position="72"/>
    </location>
</feature>
<feature type="short sequence motif" description="Nuclear localization signal">
    <location>
        <begin position="60"/>
        <end position="66"/>
    </location>
</feature>
<feature type="short sequence motif" description="MAP kinase binding" evidence="1">
    <location>
        <begin position="444"/>
        <end position="448"/>
    </location>
</feature>
<feature type="active site" description="Proton acceptor" evidence="3 4">
    <location>
        <position position="205"/>
    </location>
</feature>
<feature type="binding site" evidence="3">
    <location>
        <begin position="90"/>
        <end position="98"/>
    </location>
    <ligand>
        <name>ATP</name>
        <dbReference type="ChEBI" id="CHEBI:30616"/>
    </ligand>
</feature>
<feature type="binding site" evidence="3">
    <location>
        <position position="113"/>
    </location>
    <ligand>
        <name>ATP</name>
        <dbReference type="ChEBI" id="CHEBI:30616"/>
    </ligand>
</feature>
<feature type="binding site">
    <location>
        <begin position="160"/>
        <end position="162"/>
    </location>
    <ligand>
        <name>staurosporine</name>
        <dbReference type="ChEBI" id="CHEBI:57491"/>
    </ligand>
</feature>
<feature type="binding site" evidence="12">
    <location>
        <position position="209"/>
    </location>
    <ligand>
        <name>staurosporine</name>
        <dbReference type="ChEBI" id="CHEBI:57491"/>
    </ligand>
</feature>
<feature type="binding site" evidence="11 12">
    <location>
        <position position="299"/>
    </location>
    <ligand>
        <name>Zn(2+)</name>
        <dbReference type="ChEBI" id="CHEBI:29105"/>
    </ligand>
</feature>
<feature type="binding site" evidence="11 12">
    <location>
        <position position="311"/>
    </location>
    <ligand>
        <name>Zn(2+)</name>
        <dbReference type="ChEBI" id="CHEBI:29105"/>
    </ligand>
</feature>
<feature type="binding site" evidence="11 12">
    <location>
        <position position="314"/>
    </location>
    <ligand>
        <name>Zn(2+)</name>
        <dbReference type="ChEBI" id="CHEBI:29105"/>
    </ligand>
</feature>
<feature type="modified residue" description="Phosphoserine" evidence="2">
    <location>
        <position position="74"/>
    </location>
</feature>
<feature type="modified residue" description="Phosphothreonine" evidence="8">
    <location>
        <position position="244"/>
    </location>
</feature>
<feature type="modified residue" description="Phosphothreonine" evidence="8">
    <location>
        <position position="249"/>
    </location>
</feature>
<feature type="modified residue" description="Phosphothreonine" evidence="8">
    <location>
        <position position="379"/>
    </location>
</feature>
<feature type="modified residue" description="Phosphoserine" evidence="2">
    <location>
        <position position="437"/>
    </location>
</feature>
<feature type="modified residue" description="Phosphoserine" evidence="2">
    <location>
        <position position="440"/>
    </location>
</feature>
<feature type="modified residue" description="Phosphoserine" evidence="26">
    <location>
        <position position="452"/>
    </location>
</feature>
<feature type="splice variant" id="VSP_007353" description="In isoform 2." evidence="21 22 23">
    <original>NSCAKDLTSFAAEAIAMNRQLAQHDEDLA</original>
    <variation>WDSHFLLPPHPCRIHVRPGGLVRTVTVNE</variation>
    <location>
        <begin position="386"/>
        <end position="414"/>
    </location>
</feature>
<feature type="splice variant" id="VSP_007354" description="In isoform 2." evidence="21 22 23">
    <location>
        <begin position="415"/>
        <end position="465"/>
    </location>
</feature>
<feature type="sequence variant" id="VAR_051648" description="In dbSNP:rs3746101.">
    <original>Q</original>
    <variation>K</variation>
    <location>
        <position position="10"/>
    </location>
</feature>
<feature type="sequence variant" id="VAR_040805" description="In dbSNP:rs56158214." evidence="13">
    <original>D</original>
    <variation>N</variation>
    <location>
        <position position="73"/>
    </location>
</feature>
<feature type="sequence variant" id="VAR_051649" description="In dbSNP:rs34475638.">
    <original>R</original>
    <variation>Q</variation>
    <location>
        <position position="428"/>
    </location>
</feature>
<feature type="mutagenesis site" description="Reduced phosphorylation." evidence="12">
    <original>D</original>
    <variation>G</variation>
    <location>
        <position position="228"/>
    </location>
</feature>
<feature type="mutagenesis site" description="Loss of kinase activity; when associated with T-249." evidence="8">
    <original>T</original>
    <variation>A</variation>
    <location>
        <position position="244"/>
    </location>
</feature>
<feature type="mutagenesis site" description="Loss of kinase activity; when associated with T-244." evidence="8">
    <original>T</original>
    <variation>A</variation>
    <location>
        <position position="249"/>
    </location>
</feature>
<feature type="mutagenesis site" description="Constitutively active." evidence="8">
    <original>T</original>
    <variation>D</variation>
    <location>
        <position position="379"/>
    </location>
</feature>
<feature type="sequence conflict" description="In Ref. 2; AAF17226." evidence="24" ref="2">
    <original>V</original>
    <variation>L</variation>
    <location>
        <position position="261"/>
    </location>
</feature>
<feature type="strand" evidence="30">
    <location>
        <begin position="74"/>
        <end position="76"/>
    </location>
</feature>
<feature type="turn" evidence="27">
    <location>
        <begin position="79"/>
        <end position="81"/>
    </location>
</feature>
<feature type="strand" evidence="28">
    <location>
        <begin position="83"/>
        <end position="85"/>
    </location>
</feature>
<feature type="strand" evidence="30">
    <location>
        <begin position="90"/>
        <end position="92"/>
    </location>
</feature>
<feature type="strand" evidence="27">
    <location>
        <begin position="94"/>
        <end position="102"/>
    </location>
</feature>
<feature type="strand" evidence="27">
    <location>
        <begin position="104"/>
        <end position="106"/>
    </location>
</feature>
<feature type="strand" evidence="27">
    <location>
        <begin position="109"/>
        <end position="116"/>
    </location>
</feature>
<feature type="strand" evidence="29">
    <location>
        <begin position="119"/>
        <end position="121"/>
    </location>
</feature>
<feature type="helix" evidence="27">
    <location>
        <begin position="123"/>
        <end position="135"/>
    </location>
</feature>
<feature type="strand" evidence="27">
    <location>
        <begin position="145"/>
        <end position="151"/>
    </location>
</feature>
<feature type="strand" evidence="27">
    <location>
        <begin position="154"/>
        <end position="160"/>
    </location>
</feature>
<feature type="helix" evidence="27">
    <location>
        <begin position="167"/>
        <end position="174"/>
    </location>
</feature>
<feature type="helix" evidence="27">
    <location>
        <begin position="179"/>
        <end position="198"/>
    </location>
</feature>
<feature type="helix" evidence="27">
    <location>
        <begin position="208"/>
        <end position="210"/>
    </location>
</feature>
<feature type="strand" evidence="27">
    <location>
        <begin position="211"/>
        <end position="214"/>
    </location>
</feature>
<feature type="strand" evidence="27">
    <location>
        <begin position="216"/>
        <end position="219"/>
    </location>
</feature>
<feature type="strand" evidence="27">
    <location>
        <begin position="221"/>
        <end position="224"/>
    </location>
</feature>
<feature type="helix" evidence="27">
    <location>
        <begin position="254"/>
        <end position="256"/>
    </location>
</feature>
<feature type="helix" evidence="27">
    <location>
        <begin position="259"/>
        <end position="264"/>
    </location>
</feature>
<feature type="helix" evidence="27">
    <location>
        <begin position="267"/>
        <end position="272"/>
    </location>
</feature>
<feature type="helix" evidence="27">
    <location>
        <begin position="273"/>
        <end position="275"/>
    </location>
</feature>
<feature type="helix" evidence="27">
    <location>
        <begin position="276"/>
        <end position="290"/>
    </location>
</feature>
<feature type="helix" evidence="27">
    <location>
        <begin position="312"/>
        <end position="324"/>
    </location>
</feature>
<feature type="helix" evidence="27">
    <location>
        <begin position="331"/>
        <end position="334"/>
    </location>
</feature>
<feature type="helix" evidence="27">
    <location>
        <begin position="339"/>
        <end position="348"/>
    </location>
</feature>
<feature type="turn" evidence="27">
    <location>
        <begin position="353"/>
        <end position="355"/>
    </location>
</feature>
<feature type="helix" evidence="27">
    <location>
        <begin position="359"/>
        <end position="364"/>
    </location>
</feature>
<feature type="turn" evidence="28">
    <location>
        <begin position="366"/>
        <end position="368"/>
    </location>
</feature>
<proteinExistence type="evidence at protein level"/>
<protein>
    <recommendedName>
        <fullName>MAP kinase-interacting serine/threonine-protein kinase 2</fullName>
        <ecNumber>2.7.11.1</ecNumber>
    </recommendedName>
    <alternativeName>
        <fullName>MAP kinase signal-integrating kinase 2</fullName>
        <shortName>MAPK signal-integrating kinase 2</shortName>
        <shortName>Mnk2</shortName>
    </alternativeName>
</protein>
<sequence length="465" mass="51875">MVQKKPAELQGFHRSFKGQNPFELAFSLDQPDHGDSDFGLQCSARPDMPASQPIDIPDAKKRGKKKKRGRATDSFSGRFEDVYQLQEDVLGEGAHARVQTCINLITSQEYAVKIIEKQPGHIRSRVFREVEMLYQCQGHRNVLELIEFFEEEDRFYLVFEKMRGGSILSHIHKRRHFNELEASVVVQDVASALDFLHNKGIAHRDLKPENILCEHPNQVSPVKICDFDLGSGIKLNGDCSPISTPELLTPCGSAEYMAPEVVEAFSEEASIYDKRCDLWSLGVILYILLSGYPPFVGRCGSDCGWDRGEACPACQNMLFESIQEGKYEFPDKDWAHISCAAKDLISKLLVRDAKQRLSAAQVLQHPWVQGCAPENTLPTPMVLQRNSCAKDLTSFAAEAIAMNRQLAQHDEDLAEEEAAGQGQPVLVRATSRCLQLSPPSQSKLAQRRQRASLSSAPVVLVGDHA</sequence>
<gene>
    <name type="primary">MKNK2</name>
    <name type="synonym">GPRK7</name>
    <name type="synonym">MNK2</name>
</gene>
<dbReference type="EC" id="2.7.11.1"/>
<dbReference type="EMBL" id="AF237775">
    <property type="protein sequence ID" value="AAG26336.1"/>
    <property type="molecule type" value="mRNA"/>
</dbReference>
<dbReference type="EMBL" id="AF237776">
    <property type="protein sequence ID" value="AAG26337.1"/>
    <property type="molecule type" value="mRNA"/>
</dbReference>
<dbReference type="EMBL" id="AF125532">
    <property type="protein sequence ID" value="AAF17226.1"/>
    <property type="molecule type" value="mRNA"/>
</dbReference>
<dbReference type="EMBL" id="BC073140">
    <property type="protein sequence ID" value="AAH73140.1"/>
    <property type="molecule type" value="mRNA"/>
</dbReference>
<dbReference type="CCDS" id="CCDS12079.1">
    <molecule id="Q9HBH9-2"/>
</dbReference>
<dbReference type="CCDS" id="CCDS12080.1">
    <molecule id="Q9HBH9-1"/>
</dbReference>
<dbReference type="RefSeq" id="NP_060042.2">
    <molecule id="Q9HBH9-2"/>
    <property type="nucleotide sequence ID" value="NM_017572.3"/>
</dbReference>
<dbReference type="RefSeq" id="NP_951009.1">
    <molecule id="Q9HBH9-1"/>
    <property type="nucleotide sequence ID" value="NM_199054.3"/>
</dbReference>
<dbReference type="PDB" id="2AC3">
    <property type="method" value="X-ray"/>
    <property type="resolution" value="2.10 A"/>
    <property type="chains" value="A=72-385"/>
</dbReference>
<dbReference type="PDB" id="2AC5">
    <property type="method" value="X-ray"/>
    <property type="resolution" value="3.20 A"/>
    <property type="chains" value="A=72-385"/>
</dbReference>
<dbReference type="PDB" id="2HW7">
    <property type="method" value="X-ray"/>
    <property type="resolution" value="2.71 A"/>
    <property type="chains" value="A=72-385"/>
</dbReference>
<dbReference type="PDB" id="6CJ5">
    <property type="method" value="X-ray"/>
    <property type="resolution" value="2.80 A"/>
    <property type="chains" value="A=72-385"/>
</dbReference>
<dbReference type="PDB" id="6CJE">
    <property type="method" value="X-ray"/>
    <property type="resolution" value="3.36 A"/>
    <property type="chains" value="A=72-385"/>
</dbReference>
<dbReference type="PDB" id="6CJH">
    <property type="method" value="X-ray"/>
    <property type="resolution" value="3.60 A"/>
    <property type="chains" value="A=72-385"/>
</dbReference>
<dbReference type="PDB" id="6CJW">
    <property type="method" value="X-ray"/>
    <property type="resolution" value="3.38 A"/>
    <property type="chains" value="A=72-385"/>
</dbReference>
<dbReference type="PDB" id="6CJY">
    <property type="method" value="X-ray"/>
    <property type="resolution" value="3.05 A"/>
    <property type="chains" value="A=72-385"/>
</dbReference>
<dbReference type="PDB" id="6CK3">
    <property type="method" value="X-ray"/>
    <property type="resolution" value="2.90 A"/>
    <property type="chains" value="A=72-385"/>
</dbReference>
<dbReference type="PDB" id="6CK6">
    <property type="method" value="X-ray"/>
    <property type="resolution" value="3.32 A"/>
    <property type="chains" value="A=72-385"/>
</dbReference>
<dbReference type="PDB" id="6CKI">
    <property type="method" value="X-ray"/>
    <property type="resolution" value="2.95 A"/>
    <property type="chains" value="A=72-385"/>
</dbReference>
<dbReference type="PDB" id="6JLR">
    <property type="method" value="X-ray"/>
    <property type="resolution" value="2.90 A"/>
    <property type="chains" value="A=72-385"/>
</dbReference>
<dbReference type="PDB" id="8P9B">
    <property type="method" value="X-ray"/>
    <property type="resolution" value="2.59 A"/>
    <property type="chains" value="A=72-385"/>
</dbReference>
<dbReference type="PDB" id="8XFM">
    <property type="method" value="X-ray"/>
    <property type="resolution" value="2.60 A"/>
    <property type="chains" value="A=72-385"/>
</dbReference>
<dbReference type="PDB" id="9HRC">
    <property type="method" value="X-ray"/>
    <property type="resolution" value="3.16 A"/>
    <property type="chains" value="A=72-385"/>
</dbReference>
<dbReference type="PDBsum" id="2AC3"/>
<dbReference type="PDBsum" id="2AC5"/>
<dbReference type="PDBsum" id="2HW7"/>
<dbReference type="PDBsum" id="6CJ5"/>
<dbReference type="PDBsum" id="6CJE"/>
<dbReference type="PDBsum" id="6CJH"/>
<dbReference type="PDBsum" id="6CJW"/>
<dbReference type="PDBsum" id="6CJY"/>
<dbReference type="PDBsum" id="6CK3"/>
<dbReference type="PDBsum" id="6CK6"/>
<dbReference type="PDBsum" id="6CKI"/>
<dbReference type="PDBsum" id="6JLR"/>
<dbReference type="PDBsum" id="8P9B"/>
<dbReference type="PDBsum" id="8XFM"/>
<dbReference type="PDBsum" id="9HRC"/>
<dbReference type="SMR" id="Q9HBH9"/>
<dbReference type="BioGRID" id="109130">
    <property type="interactions" value="50"/>
</dbReference>
<dbReference type="FunCoup" id="Q9HBH9">
    <property type="interactions" value="3912"/>
</dbReference>
<dbReference type="IntAct" id="Q9HBH9">
    <property type="interactions" value="45"/>
</dbReference>
<dbReference type="STRING" id="9606.ENSP00000250896"/>
<dbReference type="BindingDB" id="Q9HBH9"/>
<dbReference type="ChEMBL" id="CHEMBL4204"/>
<dbReference type="DrugBank" id="DB12010">
    <property type="generic name" value="Fostamatinib"/>
</dbReference>
<dbReference type="DrugBank" id="DB15219">
    <property type="generic name" value="Tomivosertib"/>
</dbReference>
<dbReference type="DrugCentral" id="Q9HBH9"/>
<dbReference type="GuidetoPHARMACOLOGY" id="2105"/>
<dbReference type="GlyGen" id="Q9HBH9">
    <property type="glycosylation" value="1 site, 1 O-linked glycan (1 site)"/>
</dbReference>
<dbReference type="iPTMnet" id="Q9HBH9"/>
<dbReference type="PhosphoSitePlus" id="Q9HBH9"/>
<dbReference type="BioMuta" id="MKNK2"/>
<dbReference type="DMDM" id="90102033"/>
<dbReference type="jPOST" id="Q9HBH9"/>
<dbReference type="MassIVE" id="Q9HBH9"/>
<dbReference type="PaxDb" id="9606-ENSP00000250896"/>
<dbReference type="PeptideAtlas" id="Q9HBH9"/>
<dbReference type="ProteomicsDB" id="81554">
    <molecule id="Q9HBH9-1"/>
</dbReference>
<dbReference type="ProteomicsDB" id="81555">
    <molecule id="Q9HBH9-2"/>
</dbReference>
<dbReference type="Antibodypedia" id="10678">
    <property type="antibodies" value="295 antibodies from 30 providers"/>
</dbReference>
<dbReference type="DNASU" id="2872"/>
<dbReference type="Ensembl" id="ENST00000250896.9">
    <molecule id="Q9HBH9-1"/>
    <property type="protein sequence ID" value="ENSP00000250896.3"/>
    <property type="gene ID" value="ENSG00000099875.16"/>
</dbReference>
<dbReference type="Ensembl" id="ENST00000309340.11">
    <molecule id="Q9HBH9-2"/>
    <property type="protein sequence ID" value="ENSP00000309485.6"/>
    <property type="gene ID" value="ENSG00000099875.16"/>
</dbReference>
<dbReference type="GeneID" id="2872"/>
<dbReference type="KEGG" id="hsa:2872"/>
<dbReference type="MANE-Select" id="ENST00000250896.9">
    <property type="protein sequence ID" value="ENSP00000250896.3"/>
    <property type="RefSeq nucleotide sequence ID" value="NM_199054.3"/>
    <property type="RefSeq protein sequence ID" value="NP_951009.1"/>
</dbReference>
<dbReference type="UCSC" id="uc002lus.3">
    <molecule id="Q9HBH9-1"/>
    <property type="organism name" value="human"/>
</dbReference>
<dbReference type="AGR" id="HGNC:7111"/>
<dbReference type="CTD" id="2872"/>
<dbReference type="DisGeNET" id="2872"/>
<dbReference type="GeneCards" id="MKNK2"/>
<dbReference type="HGNC" id="HGNC:7111">
    <property type="gene designation" value="MKNK2"/>
</dbReference>
<dbReference type="HPA" id="ENSG00000099875">
    <property type="expression patterns" value="Tissue enhanced (skeletal muscle, tongue)"/>
</dbReference>
<dbReference type="MIM" id="605069">
    <property type="type" value="gene"/>
</dbReference>
<dbReference type="neXtProt" id="NX_Q9HBH9"/>
<dbReference type="OpenTargets" id="ENSG00000099875"/>
<dbReference type="PharmGKB" id="PA30830"/>
<dbReference type="VEuPathDB" id="HostDB:ENSG00000099875"/>
<dbReference type="eggNOG" id="KOG0607">
    <property type="taxonomic scope" value="Eukaryota"/>
</dbReference>
<dbReference type="GeneTree" id="ENSGT00940000154587"/>
<dbReference type="InParanoid" id="Q9HBH9"/>
<dbReference type="OMA" id="NKMTEVT"/>
<dbReference type="OrthoDB" id="5794026at2759"/>
<dbReference type="PAN-GO" id="Q9HBH9">
    <property type="GO annotations" value="8 GO annotations based on evolutionary models"/>
</dbReference>
<dbReference type="PhylomeDB" id="Q9HBH9"/>
<dbReference type="PathwayCommons" id="Q9HBH9"/>
<dbReference type="SignaLink" id="Q9HBH9"/>
<dbReference type="SIGNOR" id="Q9HBH9"/>
<dbReference type="BioGRID-ORCS" id="2872">
    <property type="hits" value="16 hits in 1197 CRISPR screens"/>
</dbReference>
<dbReference type="ChiTaRS" id="MKNK2">
    <property type="organism name" value="human"/>
</dbReference>
<dbReference type="EvolutionaryTrace" id="Q9HBH9"/>
<dbReference type="GeneWiki" id="MKNK2"/>
<dbReference type="GenomeRNAi" id="2872"/>
<dbReference type="Pharos" id="Q9HBH9">
    <property type="development level" value="Tchem"/>
</dbReference>
<dbReference type="PRO" id="PR:Q9HBH9"/>
<dbReference type="Proteomes" id="UP000005640">
    <property type="component" value="Chromosome 19"/>
</dbReference>
<dbReference type="RNAct" id="Q9HBH9">
    <property type="molecule type" value="protein"/>
</dbReference>
<dbReference type="Bgee" id="ENSG00000099875">
    <property type="expression patterns" value="Expressed in superior surface of tongue and 208 other cell types or tissues"/>
</dbReference>
<dbReference type="ExpressionAtlas" id="Q9HBH9">
    <property type="expression patterns" value="baseline and differential"/>
</dbReference>
<dbReference type="GO" id="GO:0005737">
    <property type="term" value="C:cytoplasm"/>
    <property type="evidence" value="ECO:0000318"/>
    <property type="project" value="GO_Central"/>
</dbReference>
<dbReference type="GO" id="GO:0016604">
    <property type="term" value="C:nuclear body"/>
    <property type="evidence" value="ECO:0000314"/>
    <property type="project" value="HPA"/>
</dbReference>
<dbReference type="GO" id="GO:0005654">
    <property type="term" value="C:nucleoplasm"/>
    <property type="evidence" value="ECO:0000314"/>
    <property type="project" value="HPA"/>
</dbReference>
<dbReference type="GO" id="GO:0005634">
    <property type="term" value="C:nucleus"/>
    <property type="evidence" value="ECO:0000318"/>
    <property type="project" value="GO_Central"/>
</dbReference>
<dbReference type="GO" id="GO:0016605">
    <property type="term" value="C:PML body"/>
    <property type="evidence" value="ECO:0007669"/>
    <property type="project" value="UniProtKB-SubCell"/>
</dbReference>
<dbReference type="GO" id="GO:0005524">
    <property type="term" value="F:ATP binding"/>
    <property type="evidence" value="ECO:0000314"/>
    <property type="project" value="UniProtKB"/>
</dbReference>
<dbReference type="GO" id="GO:0009931">
    <property type="term" value="F:calcium-dependent protein serine/threonine kinase activity"/>
    <property type="evidence" value="ECO:0000318"/>
    <property type="project" value="GO_Central"/>
</dbReference>
<dbReference type="GO" id="GO:0004683">
    <property type="term" value="F:calcium/calmodulin-dependent protein kinase activity"/>
    <property type="evidence" value="ECO:0000318"/>
    <property type="project" value="GO_Central"/>
</dbReference>
<dbReference type="GO" id="GO:0005516">
    <property type="term" value="F:calmodulin binding"/>
    <property type="evidence" value="ECO:0000318"/>
    <property type="project" value="GO_Central"/>
</dbReference>
<dbReference type="GO" id="GO:0046872">
    <property type="term" value="F:metal ion binding"/>
    <property type="evidence" value="ECO:0007669"/>
    <property type="project" value="UniProtKB-KW"/>
</dbReference>
<dbReference type="GO" id="GO:0106310">
    <property type="term" value="F:protein serine kinase activity"/>
    <property type="evidence" value="ECO:0007669"/>
    <property type="project" value="RHEA"/>
</dbReference>
<dbReference type="GO" id="GO:0004674">
    <property type="term" value="F:protein serine/threonine kinase activity"/>
    <property type="evidence" value="ECO:0000314"/>
    <property type="project" value="UniProtKB"/>
</dbReference>
<dbReference type="GO" id="GO:0007166">
    <property type="term" value="P:cell surface receptor signaling pathway"/>
    <property type="evidence" value="ECO:0000304"/>
    <property type="project" value="ProtInc"/>
</dbReference>
<dbReference type="GO" id="GO:0071243">
    <property type="term" value="P:cellular response to arsenic-containing substance"/>
    <property type="evidence" value="ECO:0000314"/>
    <property type="project" value="UniProtKB"/>
</dbReference>
<dbReference type="GO" id="GO:0097192">
    <property type="term" value="P:extrinsic apoptotic signaling pathway in absence of ligand"/>
    <property type="evidence" value="ECO:0007669"/>
    <property type="project" value="Ensembl"/>
</dbReference>
<dbReference type="GO" id="GO:0030097">
    <property type="term" value="P:hemopoiesis"/>
    <property type="evidence" value="ECO:0000314"/>
    <property type="project" value="UniProtKB"/>
</dbReference>
<dbReference type="GO" id="GO:0035556">
    <property type="term" value="P:intracellular signal transduction"/>
    <property type="evidence" value="ECO:0000314"/>
    <property type="project" value="UniProtKB"/>
</dbReference>
<dbReference type="GO" id="GO:0006468">
    <property type="term" value="P:protein phosphorylation"/>
    <property type="evidence" value="ECO:0000314"/>
    <property type="project" value="UniProtKB"/>
</dbReference>
<dbReference type="GO" id="GO:0006417">
    <property type="term" value="P:regulation of translation"/>
    <property type="evidence" value="ECO:0007669"/>
    <property type="project" value="UniProtKB-KW"/>
</dbReference>
<dbReference type="CDD" id="cd14173">
    <property type="entry name" value="STKc_Mnk2"/>
    <property type="match status" value="1"/>
</dbReference>
<dbReference type="FunFam" id="1.10.510.10:FF:000119">
    <property type="entry name" value="Putative map kinase-interacting serine/threonine-protein kinase 1"/>
    <property type="match status" value="1"/>
</dbReference>
<dbReference type="FunFam" id="3.30.200.20:FF:000093">
    <property type="entry name" value="Putative map kinase-interacting serine/threonine-protein kinase 1"/>
    <property type="match status" value="1"/>
</dbReference>
<dbReference type="Gene3D" id="3.30.200.20">
    <property type="entry name" value="Phosphorylase Kinase, domain 1"/>
    <property type="match status" value="1"/>
</dbReference>
<dbReference type="Gene3D" id="1.10.510.10">
    <property type="entry name" value="Transferase(Phosphotransferase) domain 1"/>
    <property type="match status" value="1"/>
</dbReference>
<dbReference type="IDEAL" id="IID00680"/>
<dbReference type="InterPro" id="IPR050205">
    <property type="entry name" value="CDPK_Ser/Thr_kinases"/>
</dbReference>
<dbReference type="InterPro" id="IPR011009">
    <property type="entry name" value="Kinase-like_dom_sf"/>
</dbReference>
<dbReference type="InterPro" id="IPR000719">
    <property type="entry name" value="Prot_kinase_dom"/>
</dbReference>
<dbReference type="InterPro" id="IPR017441">
    <property type="entry name" value="Protein_kinase_ATP_BS"/>
</dbReference>
<dbReference type="InterPro" id="IPR008271">
    <property type="entry name" value="Ser/Thr_kinase_AS"/>
</dbReference>
<dbReference type="PANTHER" id="PTHR24349">
    <property type="entry name" value="SERINE/THREONINE-PROTEIN KINASE"/>
    <property type="match status" value="1"/>
</dbReference>
<dbReference type="Pfam" id="PF00069">
    <property type="entry name" value="Pkinase"/>
    <property type="match status" value="1"/>
</dbReference>
<dbReference type="SMART" id="SM00220">
    <property type="entry name" value="S_TKc"/>
    <property type="match status" value="1"/>
</dbReference>
<dbReference type="SUPFAM" id="SSF56112">
    <property type="entry name" value="Protein kinase-like (PK-like)"/>
    <property type="match status" value="1"/>
</dbReference>
<dbReference type="PROSITE" id="PS00107">
    <property type="entry name" value="PROTEIN_KINASE_ATP"/>
    <property type="match status" value="1"/>
</dbReference>
<dbReference type="PROSITE" id="PS50011">
    <property type="entry name" value="PROTEIN_KINASE_DOM"/>
    <property type="match status" value="1"/>
</dbReference>
<dbReference type="PROSITE" id="PS00108">
    <property type="entry name" value="PROTEIN_KINASE_ST"/>
    <property type="match status" value="1"/>
</dbReference>
<comment type="function">
    <text evidence="7 8 9 10 14 15 18 19 20">Serine/threonine-protein kinase that phosphorylates SFPQ/PSF, HNRNPA1 and EIF4E. May play a role in the response to environmental stress and cytokines. Appears to regulate translation by phosphorylating EIF4E, thus increasing the affinity of this protein for the 7-methylguanosine-containing mRNA cap. Required for mediating PP2A-inhibition-induced EIF4E phosphorylation. Triggers EIF4E shuttling from cytoplasm to nucleus. Isoform 1 displays a high basal kinase activity, but isoform 2 exhibits a very low kinase activity. Acts as a mediator of the suppressive effects of IFNgamma on hematopoiesis. Negative regulator for signals that control generation of arsenic trioxide As(2)O(3)-dependent apoptosis and anti-leukemic responses. Involved in anti-apoptotic signaling in response to serum withdrawal.</text>
</comment>
<comment type="catalytic activity">
    <reaction evidence="8">
        <text>L-seryl-[protein] + ATP = O-phospho-L-seryl-[protein] + ADP + H(+)</text>
        <dbReference type="Rhea" id="RHEA:17989"/>
        <dbReference type="Rhea" id="RHEA-COMP:9863"/>
        <dbReference type="Rhea" id="RHEA-COMP:11604"/>
        <dbReference type="ChEBI" id="CHEBI:15378"/>
        <dbReference type="ChEBI" id="CHEBI:29999"/>
        <dbReference type="ChEBI" id="CHEBI:30616"/>
        <dbReference type="ChEBI" id="CHEBI:83421"/>
        <dbReference type="ChEBI" id="CHEBI:456216"/>
        <dbReference type="EC" id="2.7.11.1"/>
    </reaction>
</comment>
<comment type="catalytic activity">
    <reaction evidence="8">
        <text>L-threonyl-[protein] + ATP = O-phospho-L-threonyl-[protein] + ADP + H(+)</text>
        <dbReference type="Rhea" id="RHEA:46608"/>
        <dbReference type="Rhea" id="RHEA-COMP:11060"/>
        <dbReference type="Rhea" id="RHEA-COMP:11605"/>
        <dbReference type="ChEBI" id="CHEBI:15378"/>
        <dbReference type="ChEBI" id="CHEBI:30013"/>
        <dbReference type="ChEBI" id="CHEBI:30616"/>
        <dbReference type="ChEBI" id="CHEBI:61977"/>
        <dbReference type="ChEBI" id="CHEBI:456216"/>
        <dbReference type="EC" id="2.7.11.1"/>
    </reaction>
</comment>
<comment type="cofactor">
    <cofactor evidence="8">
        <name>Mg(2+)</name>
        <dbReference type="ChEBI" id="CHEBI:18420"/>
    </cofactor>
</comment>
<comment type="cofactor">
    <cofactor>
        <name>Zn(2+)</name>
        <dbReference type="ChEBI" id="CHEBI:29105"/>
    </cofactor>
    <text>Binds 1 zinc ion per subunit.</text>
</comment>
<comment type="activity regulation">
    <text evidence="7 10 12 16 17 19">Inhibited by CGP57380 and staurosporine. Activated by phosphorylation in a negative-feedback regulatory manner in response to chemotherapy (e.g. cytarabine) and thus impairs the generation of antileukemic responses.</text>
</comment>
<comment type="subunit">
    <text evidence="6 7 9 11 12 18">Monomer. Interacts with the C-terminal regions of EIF4G1 and EIF4G2; this interaction is promoted when MAPK pathways are repressed but repressed upon ERK proteins activation. Also binds to dephosphorylated MAPK3/ERK1 and MAPK1/ERK2. Isoform 1 interaction with phosphorylated MAPK3/ERK1 and MAPK1/ERK2 protects it from dephosphorylation and inactivation. Isoform 2 interacts with ESR2 and EIF4E in the nucleus.</text>
</comment>
<comment type="interaction">
    <interactant intactId="EBI-2864341">
        <id>Q9HBH9</id>
    </interactant>
    <interactant intactId="EBI-73946">
        <id>Q16539</id>
        <label>MAPK14</label>
    </interactant>
    <organismsDiffer>false</organismsDiffer>
    <experiments>5</experiments>
</comment>
<comment type="interaction">
    <interactant intactId="EBI-14141314">
        <id>Q9HBH9-2</id>
    </interactant>
    <interactant intactId="EBI-10988864">
        <id>P46379-2</id>
        <label>BAG6</label>
    </interactant>
    <organismsDiffer>false</organismsDiffer>
    <experiments>3</experiments>
</comment>
<comment type="interaction">
    <interactant intactId="EBI-14141314">
        <id>Q9HBH9-2</id>
    </interactant>
    <interactant intactId="EBI-948266">
        <id>O14901</id>
        <label>KLF11</label>
    </interactant>
    <organismsDiffer>false</organismsDiffer>
    <experiments>3</experiments>
</comment>
<comment type="interaction">
    <interactant intactId="EBI-14141314">
        <id>Q9HBH9-2</id>
    </interactant>
    <interactant intactId="EBI-6165891">
        <id>Q14696</id>
        <label>MESD</label>
    </interactant>
    <organismsDiffer>false</organismsDiffer>
    <experiments>3</experiments>
</comment>
<comment type="interaction">
    <interactant intactId="EBI-14141314">
        <id>Q9HBH9-2</id>
    </interactant>
    <interactant intactId="EBI-359352">
        <id>P25786</id>
        <label>PSMA1</label>
    </interactant>
    <organismsDiffer>false</organismsDiffer>
    <experiments>3</experiments>
</comment>
<comment type="subcellular location">
    <molecule>Isoform 2</molecule>
    <subcellularLocation>
        <location>Nucleus</location>
        <location>PML body</location>
    </subcellularLocation>
</comment>
<comment type="subcellular location">
    <molecule>Isoform 1</molecule>
    <subcellularLocation>
        <location>Cytoplasm</location>
    </subcellularLocation>
</comment>
<comment type="alternative products">
    <event type="alternative splicing"/>
    <isoform>
        <id>Q9HBH9-1</id>
        <name evidence="6">1</name>
        <name evidence="21">2a</name>
        <sequence type="displayed"/>
    </isoform>
    <isoform>
        <id>Q9HBH9-2</id>
        <name evidence="6">2</name>
        <name evidence="21">2b</name>
        <sequence type="described" ref="VSP_007353 VSP_007354"/>
    </isoform>
    <isoform>
        <id>Q9HBH9-3</id>
        <name evidence="21">3</name>
        <sequence type="not described"/>
    </isoform>
    <isoform>
        <id>Q9HBH9-4</id>
        <name evidence="21">4</name>
        <sequence type="not described"/>
    </isoform>
    <isoform>
        <id>Q9HBH9-5</id>
        <name evidence="21">5</name>
        <sequence type="not described"/>
    </isoform>
</comment>
<comment type="tissue specificity">
    <text evidence="6">Ubiquitously expressed in all tissues examined. Isoform 2 is expressed at higher levels in the ovary than is isoform 1.</text>
</comment>
<comment type="PTM">
    <text evidence="7 8 9 15">Dual phosphorylation of Thr-244 and Thr-249 activates the kinase. Phosphorylation of Thr-379 activates the kinase. Phosphorylated upon arsenic trioxide As(2)O(3) treatment. Phosphorylated by MAPK1/ERK2, MAPK11 and MAPK14. Dephosphorylated by PP2A.</text>
</comment>
<comment type="similarity">
    <text evidence="24">Belongs to the protein kinase superfamily. CAMK Ser/Thr protein kinase family.</text>
</comment>
<evidence type="ECO:0000250" key="1"/>
<evidence type="ECO:0000250" key="2">
    <source>
        <dbReference type="UniProtKB" id="Q8CDB0"/>
    </source>
</evidence>
<evidence type="ECO:0000255" key="3">
    <source>
        <dbReference type="PROSITE-ProRule" id="PRU00159"/>
    </source>
</evidence>
<evidence type="ECO:0000255" key="4">
    <source>
        <dbReference type="PROSITE-ProRule" id="PRU10027"/>
    </source>
</evidence>
<evidence type="ECO:0000256" key="5">
    <source>
        <dbReference type="SAM" id="MobiDB-lite"/>
    </source>
</evidence>
<evidence type="ECO:0000269" key="6">
    <source>
    </source>
</evidence>
<evidence type="ECO:0000269" key="7">
    <source>
    </source>
</evidence>
<evidence type="ECO:0000269" key="8">
    <source>
    </source>
</evidence>
<evidence type="ECO:0000269" key="9">
    <source>
    </source>
</evidence>
<evidence type="ECO:0000269" key="10">
    <source>
    </source>
</evidence>
<evidence type="ECO:0000269" key="11">
    <source>
    </source>
</evidence>
<evidence type="ECO:0000269" key="12">
    <source>
    </source>
</evidence>
<evidence type="ECO:0000269" key="13">
    <source>
    </source>
</evidence>
<evidence type="ECO:0000269" key="14">
    <source>
    </source>
</evidence>
<evidence type="ECO:0000269" key="15">
    <source>
    </source>
</evidence>
<evidence type="ECO:0000269" key="16">
    <source>
    </source>
</evidence>
<evidence type="ECO:0000269" key="17">
    <source>
    </source>
</evidence>
<evidence type="ECO:0000269" key="18">
    <source>
    </source>
</evidence>
<evidence type="ECO:0000269" key="19">
    <source>
    </source>
</evidence>
<evidence type="ECO:0000269" key="20">
    <source>
    </source>
</evidence>
<evidence type="ECO:0000303" key="21">
    <source>
    </source>
</evidence>
<evidence type="ECO:0000303" key="22">
    <source>
    </source>
</evidence>
<evidence type="ECO:0000303" key="23">
    <source ref="2"/>
</evidence>
<evidence type="ECO:0000305" key="24"/>
<evidence type="ECO:0000312" key="25">
    <source>
        <dbReference type="EMBL" id="AAG26336.1"/>
    </source>
</evidence>
<evidence type="ECO:0007744" key="26">
    <source>
    </source>
</evidence>
<evidence type="ECO:0007829" key="27">
    <source>
        <dbReference type="PDB" id="2AC3"/>
    </source>
</evidence>
<evidence type="ECO:0007829" key="28">
    <source>
        <dbReference type="PDB" id="2HW7"/>
    </source>
</evidence>
<evidence type="ECO:0007829" key="29">
    <source>
        <dbReference type="PDB" id="6CJ5"/>
    </source>
</evidence>
<evidence type="ECO:0007829" key="30">
    <source>
        <dbReference type="PDB" id="6CK3"/>
    </source>
</evidence>
<accession>Q9HBH9</accession>
<accession>Q6GPI3</accession>
<accession>Q9HBH8</accession>
<accession>Q9UHR0</accession>
<accession>Q9Y2N6</accession>